<sequence>MLDFLNRMFSRDGGNSKNIAKERLRLVLVHDRSSVSPEIVEALKEDLIKVISSYMEIDERSLEVNLNNDEASVALVANIPVLGLKRRNV</sequence>
<evidence type="ECO:0000255" key="1">
    <source>
        <dbReference type="HAMAP-Rule" id="MF_00262"/>
    </source>
</evidence>
<gene>
    <name evidence="1" type="primary">minE</name>
    <name type="ordered locus">Helmi_26280</name>
    <name type="ORF">HM1_2724</name>
</gene>
<comment type="function">
    <text evidence="1">Prevents the cell division inhibition by proteins MinC and MinD at internal division sites while permitting inhibition at polar sites. This ensures cell division at the proper site by restricting the formation of a division septum at the midpoint of the long axis of the cell.</text>
</comment>
<comment type="similarity">
    <text evidence="1">Belongs to the MinE family.</text>
</comment>
<protein>
    <recommendedName>
        <fullName evidence="1">Cell division topological specificity factor</fullName>
    </recommendedName>
</protein>
<keyword id="KW-0131">Cell cycle</keyword>
<keyword id="KW-0132">Cell division</keyword>
<keyword id="KW-1185">Reference proteome</keyword>
<feature type="chain" id="PRO_1000191286" description="Cell division topological specificity factor">
    <location>
        <begin position="1"/>
        <end position="89"/>
    </location>
</feature>
<reference key="1">
    <citation type="journal article" date="2008" name="J. Bacteriol.">
        <title>The genome of Heliobacterium modesticaldum, a phototrophic representative of the Firmicutes containing the simplest photosynthetic apparatus.</title>
        <authorList>
            <person name="Sattley W.M."/>
            <person name="Madigan M.T."/>
            <person name="Swingley W.D."/>
            <person name="Cheung P.C."/>
            <person name="Clocksin K.M."/>
            <person name="Conrad A.L."/>
            <person name="Dejesa L.C."/>
            <person name="Honchak B.M."/>
            <person name="Jung D.O."/>
            <person name="Karbach L.E."/>
            <person name="Kurdoglu A."/>
            <person name="Lahiri S."/>
            <person name="Mastrian S.D."/>
            <person name="Page L.E."/>
            <person name="Taylor H.L."/>
            <person name="Wang Z.T."/>
            <person name="Raymond J."/>
            <person name="Chen M."/>
            <person name="Blankenship R.E."/>
            <person name="Touchman J.W."/>
        </authorList>
    </citation>
    <scope>NUCLEOTIDE SEQUENCE [LARGE SCALE GENOMIC DNA]</scope>
    <source>
        <strain>ATCC 51547 / Ice1</strain>
    </source>
</reference>
<name>MINE_HELMI</name>
<organism>
    <name type="scientific">Heliobacterium modesticaldum (strain ATCC 51547 / Ice1)</name>
    <dbReference type="NCBI Taxonomy" id="498761"/>
    <lineage>
        <taxon>Bacteria</taxon>
        <taxon>Bacillati</taxon>
        <taxon>Bacillota</taxon>
        <taxon>Clostridia</taxon>
        <taxon>Eubacteriales</taxon>
        <taxon>Heliobacteriaceae</taxon>
        <taxon>Heliomicrobium</taxon>
    </lineage>
</organism>
<proteinExistence type="inferred from homology"/>
<accession>B0TBY0</accession>
<dbReference type="EMBL" id="CP000930">
    <property type="protein sequence ID" value="ABZ85253.1"/>
    <property type="molecule type" value="Genomic_DNA"/>
</dbReference>
<dbReference type="RefSeq" id="WP_012283737.1">
    <property type="nucleotide sequence ID" value="NC_010337.2"/>
</dbReference>
<dbReference type="STRING" id="498761.HM1_2724"/>
<dbReference type="KEGG" id="hmo:HM1_2724"/>
<dbReference type="eggNOG" id="COG0851">
    <property type="taxonomic scope" value="Bacteria"/>
</dbReference>
<dbReference type="HOGENOM" id="CLU_137929_1_1_9"/>
<dbReference type="OrthoDB" id="9796578at2"/>
<dbReference type="Proteomes" id="UP000008550">
    <property type="component" value="Chromosome"/>
</dbReference>
<dbReference type="GO" id="GO:0051301">
    <property type="term" value="P:cell division"/>
    <property type="evidence" value="ECO:0007669"/>
    <property type="project" value="UniProtKB-KW"/>
</dbReference>
<dbReference type="GO" id="GO:0032955">
    <property type="term" value="P:regulation of division septum assembly"/>
    <property type="evidence" value="ECO:0007669"/>
    <property type="project" value="InterPro"/>
</dbReference>
<dbReference type="Gene3D" id="3.30.1070.10">
    <property type="entry name" value="Cell division topological specificity factor MinE"/>
    <property type="match status" value="1"/>
</dbReference>
<dbReference type="HAMAP" id="MF_00262">
    <property type="entry name" value="MinE"/>
    <property type="match status" value="1"/>
</dbReference>
<dbReference type="InterPro" id="IPR005527">
    <property type="entry name" value="MinE"/>
</dbReference>
<dbReference type="InterPro" id="IPR036707">
    <property type="entry name" value="MinE_sf"/>
</dbReference>
<dbReference type="NCBIfam" id="TIGR01215">
    <property type="entry name" value="minE"/>
    <property type="match status" value="1"/>
</dbReference>
<dbReference type="Pfam" id="PF03776">
    <property type="entry name" value="MinE"/>
    <property type="match status" value="1"/>
</dbReference>
<dbReference type="SUPFAM" id="SSF55229">
    <property type="entry name" value="Cell division protein MinE topological specificity domain"/>
    <property type="match status" value="1"/>
</dbReference>